<comment type="function">
    <text evidence="1">Component of the acetyl coenzyme A carboxylase (ACC) complex. First, biotin carboxylase catalyzes the carboxylation of biotin on its carrier protein (BCCP) and then the CO(2) group is transferred by the carboxyltransferase to acetyl-CoA to form malonyl-CoA.</text>
</comment>
<comment type="catalytic activity">
    <reaction evidence="1">
        <text>N(6)-carboxybiotinyl-L-lysyl-[protein] + acetyl-CoA = N(6)-biotinyl-L-lysyl-[protein] + malonyl-CoA</text>
        <dbReference type="Rhea" id="RHEA:54728"/>
        <dbReference type="Rhea" id="RHEA-COMP:10505"/>
        <dbReference type="Rhea" id="RHEA-COMP:10506"/>
        <dbReference type="ChEBI" id="CHEBI:57288"/>
        <dbReference type="ChEBI" id="CHEBI:57384"/>
        <dbReference type="ChEBI" id="CHEBI:83144"/>
        <dbReference type="ChEBI" id="CHEBI:83145"/>
        <dbReference type="EC" id="2.1.3.15"/>
    </reaction>
</comment>
<comment type="pathway">
    <text evidence="1">Lipid metabolism; malonyl-CoA biosynthesis; malonyl-CoA from acetyl-CoA: step 1/1.</text>
</comment>
<comment type="subunit">
    <text evidence="1">Acetyl-CoA carboxylase is a heterohexamer composed of biotin carboxyl carrier protein (AccB), biotin carboxylase (AccC) and two subunits each of ACCase subunit alpha (AccA) and ACCase subunit beta (AccD).</text>
</comment>
<comment type="subcellular location">
    <subcellularLocation>
        <location evidence="1">Cytoplasm</location>
    </subcellularLocation>
</comment>
<comment type="similarity">
    <text evidence="1">Belongs to the AccA family.</text>
</comment>
<accession>B5R424</accession>
<name>ACCA_SALEP</name>
<organism>
    <name type="scientific">Salmonella enteritidis PT4 (strain P125109)</name>
    <dbReference type="NCBI Taxonomy" id="550537"/>
    <lineage>
        <taxon>Bacteria</taxon>
        <taxon>Pseudomonadati</taxon>
        <taxon>Pseudomonadota</taxon>
        <taxon>Gammaproteobacteria</taxon>
        <taxon>Enterobacterales</taxon>
        <taxon>Enterobacteriaceae</taxon>
        <taxon>Salmonella</taxon>
    </lineage>
</organism>
<evidence type="ECO:0000255" key="1">
    <source>
        <dbReference type="HAMAP-Rule" id="MF_00823"/>
    </source>
</evidence>
<evidence type="ECO:0000255" key="2">
    <source>
        <dbReference type="PROSITE-ProRule" id="PRU01137"/>
    </source>
</evidence>
<sequence>MSLNFLDFEQPIAELEAKIDSLTAVSRQDEKLDINIDEEVHRLREKSVELTRKIFADLGAWQVAQLARHPQRPYTLDYVRLAFDEFDELAGDRAYADDKAIVGGIARLEGRPVMIIGHQKGRETKEKIRRNFGMPAPEGYRKALRLMEMAERFNMPIITFIDTPGAYPGVGAEERGQSEAIARNLREMSRLNVPVICTVIGEGGSGGALAIGVGDKVNMLQYSTYSVISPEGCASILWKSADKAPLAAEAMGIIAPRLKELKLIDSIIPEPLGGAHRNPEAMAASLKAQLLEDLADLDVLSTDDLKNRRYQRLMSYGYA</sequence>
<dbReference type="EC" id="2.1.3.15" evidence="1"/>
<dbReference type="EMBL" id="AM933172">
    <property type="protein sequence ID" value="CAR31827.1"/>
    <property type="molecule type" value="Genomic_DNA"/>
</dbReference>
<dbReference type="RefSeq" id="WP_000055753.1">
    <property type="nucleotide sequence ID" value="NC_011294.1"/>
</dbReference>
<dbReference type="SMR" id="B5R424"/>
<dbReference type="KEGG" id="set:SEN0239"/>
<dbReference type="HOGENOM" id="CLU_015486_0_2_6"/>
<dbReference type="UniPathway" id="UPA00655">
    <property type="reaction ID" value="UER00711"/>
</dbReference>
<dbReference type="Proteomes" id="UP000000613">
    <property type="component" value="Chromosome"/>
</dbReference>
<dbReference type="GO" id="GO:0009317">
    <property type="term" value="C:acetyl-CoA carboxylase complex"/>
    <property type="evidence" value="ECO:0007669"/>
    <property type="project" value="InterPro"/>
</dbReference>
<dbReference type="GO" id="GO:0003989">
    <property type="term" value="F:acetyl-CoA carboxylase activity"/>
    <property type="evidence" value="ECO:0007669"/>
    <property type="project" value="InterPro"/>
</dbReference>
<dbReference type="GO" id="GO:0005524">
    <property type="term" value="F:ATP binding"/>
    <property type="evidence" value="ECO:0007669"/>
    <property type="project" value="UniProtKB-KW"/>
</dbReference>
<dbReference type="GO" id="GO:0016743">
    <property type="term" value="F:carboxyl- or carbamoyltransferase activity"/>
    <property type="evidence" value="ECO:0007669"/>
    <property type="project" value="UniProtKB-UniRule"/>
</dbReference>
<dbReference type="GO" id="GO:0006633">
    <property type="term" value="P:fatty acid biosynthetic process"/>
    <property type="evidence" value="ECO:0007669"/>
    <property type="project" value="UniProtKB-KW"/>
</dbReference>
<dbReference type="GO" id="GO:2001295">
    <property type="term" value="P:malonyl-CoA biosynthetic process"/>
    <property type="evidence" value="ECO:0007669"/>
    <property type="project" value="UniProtKB-UniRule"/>
</dbReference>
<dbReference type="FunFam" id="3.90.226.10:FF:000008">
    <property type="entry name" value="Acetyl-coenzyme A carboxylase carboxyl transferase subunit alpha"/>
    <property type="match status" value="1"/>
</dbReference>
<dbReference type="Gene3D" id="3.90.226.10">
    <property type="entry name" value="2-enoyl-CoA Hydratase, Chain A, domain 1"/>
    <property type="match status" value="1"/>
</dbReference>
<dbReference type="HAMAP" id="MF_00823">
    <property type="entry name" value="AcetylCoA_CT_alpha"/>
    <property type="match status" value="1"/>
</dbReference>
<dbReference type="InterPro" id="IPR001095">
    <property type="entry name" value="Acetyl_CoA_COase_a_su"/>
</dbReference>
<dbReference type="InterPro" id="IPR029045">
    <property type="entry name" value="ClpP/crotonase-like_dom_sf"/>
</dbReference>
<dbReference type="InterPro" id="IPR011763">
    <property type="entry name" value="COA_CT_C"/>
</dbReference>
<dbReference type="NCBIfam" id="TIGR00513">
    <property type="entry name" value="accA"/>
    <property type="match status" value="1"/>
</dbReference>
<dbReference type="NCBIfam" id="NF041504">
    <property type="entry name" value="AccA_sub"/>
    <property type="match status" value="1"/>
</dbReference>
<dbReference type="NCBIfam" id="NF004344">
    <property type="entry name" value="PRK05724.1"/>
    <property type="match status" value="1"/>
</dbReference>
<dbReference type="PANTHER" id="PTHR42853">
    <property type="entry name" value="ACETYL-COENZYME A CARBOXYLASE CARBOXYL TRANSFERASE SUBUNIT ALPHA"/>
    <property type="match status" value="1"/>
</dbReference>
<dbReference type="PANTHER" id="PTHR42853:SF3">
    <property type="entry name" value="ACETYL-COENZYME A CARBOXYLASE CARBOXYL TRANSFERASE SUBUNIT ALPHA, CHLOROPLASTIC"/>
    <property type="match status" value="1"/>
</dbReference>
<dbReference type="Pfam" id="PF03255">
    <property type="entry name" value="ACCA"/>
    <property type="match status" value="1"/>
</dbReference>
<dbReference type="PRINTS" id="PR01069">
    <property type="entry name" value="ACCCTRFRASEA"/>
</dbReference>
<dbReference type="SUPFAM" id="SSF52096">
    <property type="entry name" value="ClpP/crotonase"/>
    <property type="match status" value="1"/>
</dbReference>
<dbReference type="PROSITE" id="PS50989">
    <property type="entry name" value="COA_CT_CTER"/>
    <property type="match status" value="1"/>
</dbReference>
<feature type="chain" id="PRO_1000134516" description="Acetyl-coenzyme A carboxylase carboxyl transferase subunit alpha">
    <location>
        <begin position="1"/>
        <end position="319"/>
    </location>
</feature>
<feature type="domain" description="CoA carboxyltransferase C-terminal" evidence="2">
    <location>
        <begin position="35"/>
        <end position="296"/>
    </location>
</feature>
<gene>
    <name evidence="1" type="primary">accA</name>
    <name type="ordered locus">SEN0239</name>
</gene>
<reference key="1">
    <citation type="journal article" date="2008" name="Genome Res.">
        <title>Comparative genome analysis of Salmonella enteritidis PT4 and Salmonella gallinarum 287/91 provides insights into evolutionary and host adaptation pathways.</title>
        <authorList>
            <person name="Thomson N.R."/>
            <person name="Clayton D.J."/>
            <person name="Windhorst D."/>
            <person name="Vernikos G."/>
            <person name="Davidson S."/>
            <person name="Churcher C."/>
            <person name="Quail M.A."/>
            <person name="Stevens M."/>
            <person name="Jones M.A."/>
            <person name="Watson M."/>
            <person name="Barron A."/>
            <person name="Layton A."/>
            <person name="Pickard D."/>
            <person name="Kingsley R.A."/>
            <person name="Bignell A."/>
            <person name="Clark L."/>
            <person name="Harris B."/>
            <person name="Ormond D."/>
            <person name="Abdellah Z."/>
            <person name="Brooks K."/>
            <person name="Cherevach I."/>
            <person name="Chillingworth T."/>
            <person name="Woodward J."/>
            <person name="Norberczak H."/>
            <person name="Lord A."/>
            <person name="Arrowsmith C."/>
            <person name="Jagels K."/>
            <person name="Moule S."/>
            <person name="Mungall K."/>
            <person name="Saunders M."/>
            <person name="Whitehead S."/>
            <person name="Chabalgoity J.A."/>
            <person name="Maskell D."/>
            <person name="Humphreys T."/>
            <person name="Roberts M."/>
            <person name="Barrow P.A."/>
            <person name="Dougan G."/>
            <person name="Parkhill J."/>
        </authorList>
    </citation>
    <scope>NUCLEOTIDE SEQUENCE [LARGE SCALE GENOMIC DNA]</scope>
    <source>
        <strain>P125109</strain>
    </source>
</reference>
<proteinExistence type="inferred from homology"/>
<protein>
    <recommendedName>
        <fullName evidence="1">Acetyl-coenzyme A carboxylase carboxyl transferase subunit alpha</fullName>
        <shortName evidence="1">ACCase subunit alpha</shortName>
        <shortName evidence="1">Acetyl-CoA carboxylase carboxyltransferase subunit alpha</shortName>
        <ecNumber evidence="1">2.1.3.15</ecNumber>
    </recommendedName>
</protein>
<keyword id="KW-0067">ATP-binding</keyword>
<keyword id="KW-0963">Cytoplasm</keyword>
<keyword id="KW-0275">Fatty acid biosynthesis</keyword>
<keyword id="KW-0276">Fatty acid metabolism</keyword>
<keyword id="KW-0444">Lipid biosynthesis</keyword>
<keyword id="KW-0443">Lipid metabolism</keyword>
<keyword id="KW-0547">Nucleotide-binding</keyword>
<keyword id="KW-0808">Transferase</keyword>